<protein>
    <recommendedName>
        <fullName evidence="1">ATP phosphoribosyltransferase</fullName>
        <shortName evidence="1">ATP-PRT</shortName>
        <shortName evidence="1">ATP-PRTase</shortName>
        <ecNumber evidence="1">2.4.2.17</ecNumber>
    </recommendedName>
</protein>
<feature type="chain" id="PRO_1000004477" description="ATP phosphoribosyltransferase">
    <location>
        <begin position="1"/>
        <end position="283"/>
    </location>
</feature>
<gene>
    <name evidence="1" type="primary">hisG</name>
    <name type="ordered locus">Mkms_3207</name>
</gene>
<comment type="function">
    <text evidence="1">Catalyzes the condensation of ATP and 5-phosphoribose 1-diphosphate to form N'-(5'-phosphoribosyl)-ATP (PR-ATP). Has a crucial role in the pathway because the rate of histidine biosynthesis seems to be controlled primarily by regulation of HisG enzymatic activity.</text>
</comment>
<comment type="catalytic activity">
    <reaction evidence="1">
        <text>1-(5-phospho-beta-D-ribosyl)-ATP + diphosphate = 5-phospho-alpha-D-ribose 1-diphosphate + ATP</text>
        <dbReference type="Rhea" id="RHEA:18473"/>
        <dbReference type="ChEBI" id="CHEBI:30616"/>
        <dbReference type="ChEBI" id="CHEBI:33019"/>
        <dbReference type="ChEBI" id="CHEBI:58017"/>
        <dbReference type="ChEBI" id="CHEBI:73183"/>
        <dbReference type="EC" id="2.4.2.17"/>
    </reaction>
</comment>
<comment type="cofactor">
    <cofactor evidence="1">
        <name>Mg(2+)</name>
        <dbReference type="ChEBI" id="CHEBI:18420"/>
    </cofactor>
</comment>
<comment type="activity regulation">
    <text evidence="1">Feedback inhibited by histidine.</text>
</comment>
<comment type="pathway">
    <text evidence="1">Amino-acid biosynthesis; L-histidine biosynthesis; L-histidine from 5-phospho-alpha-D-ribose 1-diphosphate: step 1/9.</text>
</comment>
<comment type="subunit">
    <text evidence="1">Equilibrium between an active dimeric form, an inactive hexameric form and higher aggregates. Interconversion between the various forms is largely reversible and is influenced by the natural substrates and inhibitors of the enzyme.</text>
</comment>
<comment type="subcellular location">
    <subcellularLocation>
        <location evidence="1">Cytoplasm</location>
    </subcellularLocation>
</comment>
<comment type="similarity">
    <text evidence="1">Belongs to the ATP phosphoribosyltransferase family. Long subfamily.</text>
</comment>
<reference key="1">
    <citation type="submission" date="2006-12" db="EMBL/GenBank/DDBJ databases">
        <title>Complete sequence of chromosome of Mycobacterium sp. KMS.</title>
        <authorList>
            <consortium name="US DOE Joint Genome Institute"/>
            <person name="Copeland A."/>
            <person name="Lucas S."/>
            <person name="Lapidus A."/>
            <person name="Barry K."/>
            <person name="Detter J.C."/>
            <person name="Glavina del Rio T."/>
            <person name="Hammon N."/>
            <person name="Israni S."/>
            <person name="Dalin E."/>
            <person name="Tice H."/>
            <person name="Pitluck S."/>
            <person name="Kiss H."/>
            <person name="Brettin T."/>
            <person name="Bruce D."/>
            <person name="Han C."/>
            <person name="Tapia R."/>
            <person name="Gilna P."/>
            <person name="Schmutz J."/>
            <person name="Larimer F."/>
            <person name="Land M."/>
            <person name="Hauser L."/>
            <person name="Kyrpides N."/>
            <person name="Mikhailova N."/>
            <person name="Miller C.D."/>
            <person name="Richardson P."/>
        </authorList>
    </citation>
    <scope>NUCLEOTIDE SEQUENCE [LARGE SCALE GENOMIC DNA]</scope>
    <source>
        <strain>KMS</strain>
    </source>
</reference>
<proteinExistence type="inferred from homology"/>
<organism>
    <name type="scientific">Mycobacterium sp. (strain KMS)</name>
    <dbReference type="NCBI Taxonomy" id="189918"/>
    <lineage>
        <taxon>Bacteria</taxon>
        <taxon>Bacillati</taxon>
        <taxon>Actinomycetota</taxon>
        <taxon>Actinomycetes</taxon>
        <taxon>Mycobacteriales</taxon>
        <taxon>Mycobacteriaceae</taxon>
        <taxon>Mycobacterium</taxon>
    </lineage>
</organism>
<accession>A1UHU3</accession>
<sequence>MLRVAVPNKGTLSEPAAEILSEAGYRRRTDTKDLTVVDPANNVEFFFLRPKDIAIYVGSGQLDLGITGRDLAAESDAPVRERLALGFGSSTFRYAAPAGRDWAPEDLAGRRIATAFPNLVRKDLAGRGIEATVIRLDGAVEISVALGVADAIADVVGSGRTLGLHNLVAFGDSLCDSEAVLIERDGAGDENAAARDQLAARVQGVVFGQQYLMLDYDCPRHVLDRATEVTPGLESPTIAPLADQDWVAVRALVPRRDVNSIMDELAAIGAKAILASDIRFCRF</sequence>
<dbReference type="EC" id="2.4.2.17" evidence="1"/>
<dbReference type="EMBL" id="CP000518">
    <property type="protein sequence ID" value="ABL92401.1"/>
    <property type="molecule type" value="Genomic_DNA"/>
</dbReference>
<dbReference type="SMR" id="A1UHU3"/>
<dbReference type="STRING" id="189918.Mkms_3207"/>
<dbReference type="KEGG" id="mkm:Mkms_3207"/>
<dbReference type="HOGENOM" id="CLU_038115_1_1_11"/>
<dbReference type="OrthoDB" id="9801867at2"/>
<dbReference type="UniPathway" id="UPA00031">
    <property type="reaction ID" value="UER00006"/>
</dbReference>
<dbReference type="GO" id="GO:0005737">
    <property type="term" value="C:cytoplasm"/>
    <property type="evidence" value="ECO:0007669"/>
    <property type="project" value="UniProtKB-SubCell"/>
</dbReference>
<dbReference type="GO" id="GO:0005524">
    <property type="term" value="F:ATP binding"/>
    <property type="evidence" value="ECO:0007669"/>
    <property type="project" value="UniProtKB-KW"/>
</dbReference>
<dbReference type="GO" id="GO:0003879">
    <property type="term" value="F:ATP phosphoribosyltransferase activity"/>
    <property type="evidence" value="ECO:0007669"/>
    <property type="project" value="UniProtKB-UniRule"/>
</dbReference>
<dbReference type="GO" id="GO:0000287">
    <property type="term" value="F:magnesium ion binding"/>
    <property type="evidence" value="ECO:0007669"/>
    <property type="project" value="UniProtKB-UniRule"/>
</dbReference>
<dbReference type="GO" id="GO:0000105">
    <property type="term" value="P:L-histidine biosynthetic process"/>
    <property type="evidence" value="ECO:0007669"/>
    <property type="project" value="UniProtKB-UniRule"/>
</dbReference>
<dbReference type="CDD" id="cd13591">
    <property type="entry name" value="PBP2_HisGL1"/>
    <property type="match status" value="1"/>
</dbReference>
<dbReference type="FunFam" id="3.30.70.120:FF:000003">
    <property type="entry name" value="ATP phosphoribosyltransferase"/>
    <property type="match status" value="1"/>
</dbReference>
<dbReference type="FunFam" id="3.40.190.10:FF:000136">
    <property type="entry name" value="ATP phosphoribosyltransferase"/>
    <property type="match status" value="1"/>
</dbReference>
<dbReference type="Gene3D" id="3.30.70.120">
    <property type="match status" value="1"/>
</dbReference>
<dbReference type="Gene3D" id="3.40.190.10">
    <property type="entry name" value="Periplasmic binding protein-like II"/>
    <property type="match status" value="2"/>
</dbReference>
<dbReference type="HAMAP" id="MF_00079">
    <property type="entry name" value="HisG_Long"/>
    <property type="match status" value="1"/>
</dbReference>
<dbReference type="InterPro" id="IPR020621">
    <property type="entry name" value="ATP-PRT_HisG_long"/>
</dbReference>
<dbReference type="InterPro" id="IPR013820">
    <property type="entry name" value="ATP_PRibTrfase_cat"/>
</dbReference>
<dbReference type="InterPro" id="IPR018198">
    <property type="entry name" value="ATP_PRibTrfase_CS"/>
</dbReference>
<dbReference type="InterPro" id="IPR001348">
    <property type="entry name" value="ATP_PRibTrfase_HisG"/>
</dbReference>
<dbReference type="InterPro" id="IPR013115">
    <property type="entry name" value="HisG_C"/>
</dbReference>
<dbReference type="InterPro" id="IPR011322">
    <property type="entry name" value="N-reg_PII-like_a/b"/>
</dbReference>
<dbReference type="InterPro" id="IPR015867">
    <property type="entry name" value="N-reg_PII/ATP_PRibTrfase_C"/>
</dbReference>
<dbReference type="NCBIfam" id="TIGR00070">
    <property type="entry name" value="hisG"/>
    <property type="match status" value="1"/>
</dbReference>
<dbReference type="NCBIfam" id="TIGR03455">
    <property type="entry name" value="HisG_C-term"/>
    <property type="match status" value="1"/>
</dbReference>
<dbReference type="PANTHER" id="PTHR21403:SF8">
    <property type="entry name" value="ATP PHOSPHORIBOSYLTRANSFERASE"/>
    <property type="match status" value="1"/>
</dbReference>
<dbReference type="PANTHER" id="PTHR21403">
    <property type="entry name" value="ATP PHOSPHORIBOSYLTRANSFERASE ATP-PRTASE"/>
    <property type="match status" value="1"/>
</dbReference>
<dbReference type="Pfam" id="PF01634">
    <property type="entry name" value="HisG"/>
    <property type="match status" value="1"/>
</dbReference>
<dbReference type="Pfam" id="PF08029">
    <property type="entry name" value="HisG_C"/>
    <property type="match status" value="1"/>
</dbReference>
<dbReference type="SUPFAM" id="SSF54913">
    <property type="entry name" value="GlnB-like"/>
    <property type="match status" value="1"/>
</dbReference>
<dbReference type="SUPFAM" id="SSF53850">
    <property type="entry name" value="Periplasmic binding protein-like II"/>
    <property type="match status" value="1"/>
</dbReference>
<dbReference type="PROSITE" id="PS01316">
    <property type="entry name" value="ATP_P_PHORIBOSYLTR"/>
    <property type="match status" value="1"/>
</dbReference>
<keyword id="KW-0028">Amino-acid biosynthesis</keyword>
<keyword id="KW-0067">ATP-binding</keyword>
<keyword id="KW-0963">Cytoplasm</keyword>
<keyword id="KW-0328">Glycosyltransferase</keyword>
<keyword id="KW-0368">Histidine biosynthesis</keyword>
<keyword id="KW-0460">Magnesium</keyword>
<keyword id="KW-0479">Metal-binding</keyword>
<keyword id="KW-0547">Nucleotide-binding</keyword>
<keyword id="KW-0808">Transferase</keyword>
<evidence type="ECO:0000255" key="1">
    <source>
        <dbReference type="HAMAP-Rule" id="MF_00079"/>
    </source>
</evidence>
<name>HIS1_MYCSK</name>